<evidence type="ECO:0000255" key="1">
    <source>
        <dbReference type="HAMAP-Rule" id="MF_01595"/>
    </source>
</evidence>
<organism>
    <name type="scientific">Nitrosomonas europaea (strain ATCC 19718 / CIP 103999 / KCTC 2705 / NBRC 14298)</name>
    <dbReference type="NCBI Taxonomy" id="228410"/>
    <lineage>
        <taxon>Bacteria</taxon>
        <taxon>Pseudomonadati</taxon>
        <taxon>Pseudomonadota</taxon>
        <taxon>Betaproteobacteria</taxon>
        <taxon>Nitrosomonadales</taxon>
        <taxon>Nitrosomonadaceae</taxon>
        <taxon>Nitrosomonas</taxon>
    </lineage>
</organism>
<gene>
    <name evidence="1" type="primary">pnp</name>
    <name type="ordered locus">NE0172</name>
</gene>
<protein>
    <recommendedName>
        <fullName evidence="1">Polyribonucleotide nucleotidyltransferase</fullName>
        <ecNumber evidence="1">2.7.7.8</ecNumber>
    </recommendedName>
    <alternativeName>
        <fullName evidence="1">Polynucleotide phosphorylase</fullName>
        <shortName evidence="1">PNPase</shortName>
    </alternativeName>
</protein>
<proteinExistence type="inferred from homology"/>
<comment type="function">
    <text evidence="1">Involved in mRNA degradation. Catalyzes the phosphorolysis of single-stranded polyribonucleotides processively in the 3'- to 5'-direction.</text>
</comment>
<comment type="catalytic activity">
    <reaction evidence="1">
        <text>RNA(n+1) + phosphate = RNA(n) + a ribonucleoside 5'-diphosphate</text>
        <dbReference type="Rhea" id="RHEA:22096"/>
        <dbReference type="Rhea" id="RHEA-COMP:14527"/>
        <dbReference type="Rhea" id="RHEA-COMP:17342"/>
        <dbReference type="ChEBI" id="CHEBI:43474"/>
        <dbReference type="ChEBI" id="CHEBI:57930"/>
        <dbReference type="ChEBI" id="CHEBI:140395"/>
        <dbReference type="EC" id="2.7.7.8"/>
    </reaction>
</comment>
<comment type="cofactor">
    <cofactor evidence="1">
        <name>Mg(2+)</name>
        <dbReference type="ChEBI" id="CHEBI:18420"/>
    </cofactor>
</comment>
<comment type="subcellular location">
    <subcellularLocation>
        <location evidence="1">Cytoplasm</location>
    </subcellularLocation>
</comment>
<comment type="similarity">
    <text evidence="1">Belongs to the polyribonucleotide nucleotidyltransferase family.</text>
</comment>
<feature type="chain" id="PRO_0000329737" description="Polyribonucleotide nucleotidyltransferase">
    <location>
        <begin position="1"/>
        <end position="708"/>
    </location>
</feature>
<feature type="domain" description="KH" evidence="1">
    <location>
        <begin position="553"/>
        <end position="612"/>
    </location>
</feature>
<feature type="domain" description="S1 motif" evidence="1">
    <location>
        <begin position="622"/>
        <end position="690"/>
    </location>
</feature>
<feature type="binding site" evidence="1">
    <location>
        <position position="486"/>
    </location>
    <ligand>
        <name>Mg(2+)</name>
        <dbReference type="ChEBI" id="CHEBI:18420"/>
    </ligand>
</feature>
<feature type="binding site" evidence="1">
    <location>
        <position position="492"/>
    </location>
    <ligand>
        <name>Mg(2+)</name>
        <dbReference type="ChEBI" id="CHEBI:18420"/>
    </ligand>
</feature>
<sequence length="708" mass="77152">MKPIKKSITYGRHTLTIETGEIAKQAHGAVIVSMDDTVVLVTAVGDKKTKPGQDFFPLTVDYQEKFYSAGRIPGSFFKREGRPSEKETLTSRLIDRPIRPLFPDGFYNEVQVVAMVLSSDTEIDADIPAMIGTSAALILSGIPFDGPVGAARVGYINNEYILNPTTTQLKESQLNLVVAGTQKAVLMVESEADELSEDVMLGAVTYGHDQMQQVIDMINELADEAGVTAWDWQPAEQDLSLVEKVTQLAEADLRNAFRLKQKSARVEAINEIWQRVFTELKVGTEEGPSEQAVREIGFALEARIVRNSILDGESRIDGRGTRTVRPITIRHGVLPRTHGSALFTRGETQALAITTLGTARDEQKIDALQGDYSERFMLHYNMPPFATGETGRVGTPKRREIGHGRLAKRALLAVIPPVEEFGYSMRVVSEVTESNGSSSMASVCGGCLSLMDAGVPLKAHVAGIAMGLIKEGNRFAVLTDILGDEDHLGDMDFKVAGTEHGITALQMDIKIQGITKEIMQVALLQAKEGRLHILEIMKQSLPIARESISVHAPRIIKFKINPEKIRDVIGKGGAVIRALTEETGTTIDISDDGSVTIACVSSEGGEQARKRIEDITADVEVGRIYEGTVLKLLDFGAIVSVLPGKDGLLHISQIANERVENVADHLKEGQTVRVKVLEADEKGRLRLSMKAASISTEITADNPDNTEK</sequence>
<dbReference type="EC" id="2.7.7.8" evidence="1"/>
<dbReference type="EMBL" id="AL954747">
    <property type="protein sequence ID" value="CAD84083.1"/>
    <property type="molecule type" value="Genomic_DNA"/>
</dbReference>
<dbReference type="RefSeq" id="WP_011110817.1">
    <property type="nucleotide sequence ID" value="NC_004757.1"/>
</dbReference>
<dbReference type="SMR" id="Q82XT0"/>
<dbReference type="STRING" id="228410.NE0172"/>
<dbReference type="GeneID" id="87103380"/>
<dbReference type="KEGG" id="neu:NE0172"/>
<dbReference type="eggNOG" id="COG1185">
    <property type="taxonomic scope" value="Bacteria"/>
</dbReference>
<dbReference type="HOGENOM" id="CLU_004217_2_2_4"/>
<dbReference type="OrthoDB" id="9804305at2"/>
<dbReference type="PhylomeDB" id="Q82XT0"/>
<dbReference type="Proteomes" id="UP000001416">
    <property type="component" value="Chromosome"/>
</dbReference>
<dbReference type="GO" id="GO:0005829">
    <property type="term" value="C:cytosol"/>
    <property type="evidence" value="ECO:0007669"/>
    <property type="project" value="TreeGrafter"/>
</dbReference>
<dbReference type="GO" id="GO:0000175">
    <property type="term" value="F:3'-5'-RNA exonuclease activity"/>
    <property type="evidence" value="ECO:0007669"/>
    <property type="project" value="TreeGrafter"/>
</dbReference>
<dbReference type="GO" id="GO:0000287">
    <property type="term" value="F:magnesium ion binding"/>
    <property type="evidence" value="ECO:0007669"/>
    <property type="project" value="UniProtKB-UniRule"/>
</dbReference>
<dbReference type="GO" id="GO:0004654">
    <property type="term" value="F:polyribonucleotide nucleotidyltransferase activity"/>
    <property type="evidence" value="ECO:0007669"/>
    <property type="project" value="UniProtKB-UniRule"/>
</dbReference>
<dbReference type="GO" id="GO:0003723">
    <property type="term" value="F:RNA binding"/>
    <property type="evidence" value="ECO:0007669"/>
    <property type="project" value="UniProtKB-UniRule"/>
</dbReference>
<dbReference type="GO" id="GO:0006402">
    <property type="term" value="P:mRNA catabolic process"/>
    <property type="evidence" value="ECO:0007669"/>
    <property type="project" value="UniProtKB-UniRule"/>
</dbReference>
<dbReference type="GO" id="GO:0006396">
    <property type="term" value="P:RNA processing"/>
    <property type="evidence" value="ECO:0007669"/>
    <property type="project" value="InterPro"/>
</dbReference>
<dbReference type="CDD" id="cd02393">
    <property type="entry name" value="KH-I_PNPase"/>
    <property type="match status" value="1"/>
</dbReference>
<dbReference type="CDD" id="cd11363">
    <property type="entry name" value="RNase_PH_PNPase_1"/>
    <property type="match status" value="1"/>
</dbReference>
<dbReference type="CDD" id="cd11364">
    <property type="entry name" value="RNase_PH_PNPase_2"/>
    <property type="match status" value="1"/>
</dbReference>
<dbReference type="CDD" id="cd04472">
    <property type="entry name" value="S1_PNPase"/>
    <property type="match status" value="1"/>
</dbReference>
<dbReference type="FunFam" id="2.40.50.140:FF:000023">
    <property type="entry name" value="Polyribonucleotide nucleotidyltransferase"/>
    <property type="match status" value="1"/>
</dbReference>
<dbReference type="FunFam" id="3.30.1370.10:FF:000001">
    <property type="entry name" value="Polyribonucleotide nucleotidyltransferase"/>
    <property type="match status" value="1"/>
</dbReference>
<dbReference type="FunFam" id="3.30.230.70:FF:000001">
    <property type="entry name" value="Polyribonucleotide nucleotidyltransferase"/>
    <property type="match status" value="1"/>
</dbReference>
<dbReference type="FunFam" id="3.30.230.70:FF:000002">
    <property type="entry name" value="Polyribonucleotide nucleotidyltransferase"/>
    <property type="match status" value="1"/>
</dbReference>
<dbReference type="Gene3D" id="3.30.230.70">
    <property type="entry name" value="GHMP Kinase, N-terminal domain"/>
    <property type="match status" value="2"/>
</dbReference>
<dbReference type="Gene3D" id="3.30.1370.10">
    <property type="entry name" value="K Homology domain, type 1"/>
    <property type="match status" value="1"/>
</dbReference>
<dbReference type="Gene3D" id="2.40.50.140">
    <property type="entry name" value="Nucleic acid-binding proteins"/>
    <property type="match status" value="1"/>
</dbReference>
<dbReference type="HAMAP" id="MF_01595">
    <property type="entry name" value="PNPase"/>
    <property type="match status" value="1"/>
</dbReference>
<dbReference type="InterPro" id="IPR001247">
    <property type="entry name" value="ExoRNase_PH_dom1"/>
</dbReference>
<dbReference type="InterPro" id="IPR015847">
    <property type="entry name" value="ExoRNase_PH_dom2"/>
</dbReference>
<dbReference type="InterPro" id="IPR036345">
    <property type="entry name" value="ExoRNase_PH_dom2_sf"/>
</dbReference>
<dbReference type="InterPro" id="IPR004087">
    <property type="entry name" value="KH_dom"/>
</dbReference>
<dbReference type="InterPro" id="IPR004088">
    <property type="entry name" value="KH_dom_type_1"/>
</dbReference>
<dbReference type="InterPro" id="IPR036612">
    <property type="entry name" value="KH_dom_type_1_sf"/>
</dbReference>
<dbReference type="InterPro" id="IPR012340">
    <property type="entry name" value="NA-bd_OB-fold"/>
</dbReference>
<dbReference type="InterPro" id="IPR012162">
    <property type="entry name" value="PNPase"/>
</dbReference>
<dbReference type="InterPro" id="IPR027408">
    <property type="entry name" value="PNPase/RNase_PH_dom_sf"/>
</dbReference>
<dbReference type="InterPro" id="IPR015848">
    <property type="entry name" value="PNPase_PH_RNA-bd_bac/org-type"/>
</dbReference>
<dbReference type="InterPro" id="IPR020568">
    <property type="entry name" value="Ribosomal_Su5_D2-typ_SF"/>
</dbReference>
<dbReference type="InterPro" id="IPR003029">
    <property type="entry name" value="S1_domain"/>
</dbReference>
<dbReference type="NCBIfam" id="TIGR03591">
    <property type="entry name" value="polynuc_phos"/>
    <property type="match status" value="1"/>
</dbReference>
<dbReference type="NCBIfam" id="NF008805">
    <property type="entry name" value="PRK11824.1"/>
    <property type="match status" value="1"/>
</dbReference>
<dbReference type="PANTHER" id="PTHR11252">
    <property type="entry name" value="POLYRIBONUCLEOTIDE NUCLEOTIDYLTRANSFERASE"/>
    <property type="match status" value="1"/>
</dbReference>
<dbReference type="PANTHER" id="PTHR11252:SF0">
    <property type="entry name" value="POLYRIBONUCLEOTIDE NUCLEOTIDYLTRANSFERASE 1, MITOCHONDRIAL"/>
    <property type="match status" value="1"/>
</dbReference>
<dbReference type="Pfam" id="PF00013">
    <property type="entry name" value="KH_1"/>
    <property type="match status" value="1"/>
</dbReference>
<dbReference type="Pfam" id="PF03726">
    <property type="entry name" value="PNPase"/>
    <property type="match status" value="1"/>
</dbReference>
<dbReference type="Pfam" id="PF01138">
    <property type="entry name" value="RNase_PH"/>
    <property type="match status" value="2"/>
</dbReference>
<dbReference type="Pfam" id="PF03725">
    <property type="entry name" value="RNase_PH_C"/>
    <property type="match status" value="2"/>
</dbReference>
<dbReference type="Pfam" id="PF00575">
    <property type="entry name" value="S1"/>
    <property type="match status" value="1"/>
</dbReference>
<dbReference type="PIRSF" id="PIRSF005499">
    <property type="entry name" value="PNPase"/>
    <property type="match status" value="1"/>
</dbReference>
<dbReference type="SMART" id="SM00322">
    <property type="entry name" value="KH"/>
    <property type="match status" value="1"/>
</dbReference>
<dbReference type="SMART" id="SM00316">
    <property type="entry name" value="S1"/>
    <property type="match status" value="1"/>
</dbReference>
<dbReference type="SUPFAM" id="SSF54791">
    <property type="entry name" value="Eukaryotic type KH-domain (KH-domain type I)"/>
    <property type="match status" value="1"/>
</dbReference>
<dbReference type="SUPFAM" id="SSF50249">
    <property type="entry name" value="Nucleic acid-binding proteins"/>
    <property type="match status" value="1"/>
</dbReference>
<dbReference type="SUPFAM" id="SSF55666">
    <property type="entry name" value="Ribonuclease PH domain 2-like"/>
    <property type="match status" value="2"/>
</dbReference>
<dbReference type="SUPFAM" id="SSF54211">
    <property type="entry name" value="Ribosomal protein S5 domain 2-like"/>
    <property type="match status" value="2"/>
</dbReference>
<dbReference type="PROSITE" id="PS50084">
    <property type="entry name" value="KH_TYPE_1"/>
    <property type="match status" value="1"/>
</dbReference>
<dbReference type="PROSITE" id="PS50126">
    <property type="entry name" value="S1"/>
    <property type="match status" value="1"/>
</dbReference>
<name>PNP_NITEU</name>
<keyword id="KW-0963">Cytoplasm</keyword>
<keyword id="KW-0460">Magnesium</keyword>
<keyword id="KW-0479">Metal-binding</keyword>
<keyword id="KW-0548">Nucleotidyltransferase</keyword>
<keyword id="KW-1185">Reference proteome</keyword>
<keyword id="KW-0694">RNA-binding</keyword>
<keyword id="KW-0808">Transferase</keyword>
<reference key="1">
    <citation type="journal article" date="2003" name="J. Bacteriol.">
        <title>Complete genome sequence of the ammonia-oxidizing bacterium and obligate chemolithoautotroph Nitrosomonas europaea.</title>
        <authorList>
            <person name="Chain P."/>
            <person name="Lamerdin J.E."/>
            <person name="Larimer F.W."/>
            <person name="Regala W."/>
            <person name="Lao V."/>
            <person name="Land M.L."/>
            <person name="Hauser L."/>
            <person name="Hooper A.B."/>
            <person name="Klotz M.G."/>
            <person name="Norton J."/>
            <person name="Sayavedra-Soto L.A."/>
            <person name="Arciero D.M."/>
            <person name="Hommes N.G."/>
            <person name="Whittaker M.M."/>
            <person name="Arp D.J."/>
        </authorList>
    </citation>
    <scope>NUCLEOTIDE SEQUENCE [LARGE SCALE GENOMIC DNA]</scope>
    <source>
        <strain>ATCC 19718 / CIP 103999 / KCTC 2705 / NBRC 14298</strain>
    </source>
</reference>
<accession>Q82XT0</accession>